<evidence type="ECO:0000255" key="1">
    <source>
        <dbReference type="HAMAP-Rule" id="MF_00274"/>
    </source>
</evidence>
<sequence length="109" mass="11947">MFGKGGMGNLMKQAQMMQEKMAKMQEEIARMEVTGESGAGLVKVTMTGTHNVRKVEIDPSLLEDDKELLEDLVAAACNDAARRVEENQKTKMAEVTGGMQLPPGMKMPF</sequence>
<keyword id="KW-0963">Cytoplasm</keyword>
<keyword id="KW-0238">DNA-binding</keyword>
<keyword id="KW-1185">Reference proteome</keyword>
<comment type="function">
    <text evidence="1">Binds to DNA and alters its conformation. May be involved in regulation of gene expression, nucleoid organization and DNA protection.</text>
</comment>
<comment type="subunit">
    <text evidence="1">Homodimer.</text>
</comment>
<comment type="subcellular location">
    <subcellularLocation>
        <location evidence="1">Cytoplasm</location>
        <location evidence="1">Nucleoid</location>
    </subcellularLocation>
</comment>
<comment type="similarity">
    <text evidence="1">Belongs to the YbaB/EbfC family.</text>
</comment>
<dbReference type="EMBL" id="CP000507">
    <property type="protein sequence ID" value="ABL99518.1"/>
    <property type="molecule type" value="Genomic_DNA"/>
</dbReference>
<dbReference type="RefSeq" id="WP_011759427.1">
    <property type="nucleotide sequence ID" value="NC_008700.1"/>
</dbReference>
<dbReference type="SMR" id="A1S562"/>
<dbReference type="STRING" id="326297.Sama_1311"/>
<dbReference type="KEGG" id="saz:Sama_1311"/>
<dbReference type="eggNOG" id="COG0718">
    <property type="taxonomic scope" value="Bacteria"/>
</dbReference>
<dbReference type="HOGENOM" id="CLU_140930_0_0_6"/>
<dbReference type="OrthoDB" id="9808738at2"/>
<dbReference type="Proteomes" id="UP000009175">
    <property type="component" value="Chromosome"/>
</dbReference>
<dbReference type="GO" id="GO:0043590">
    <property type="term" value="C:bacterial nucleoid"/>
    <property type="evidence" value="ECO:0007669"/>
    <property type="project" value="UniProtKB-UniRule"/>
</dbReference>
<dbReference type="GO" id="GO:0005829">
    <property type="term" value="C:cytosol"/>
    <property type="evidence" value="ECO:0007669"/>
    <property type="project" value="TreeGrafter"/>
</dbReference>
<dbReference type="GO" id="GO:0003677">
    <property type="term" value="F:DNA binding"/>
    <property type="evidence" value="ECO:0007669"/>
    <property type="project" value="UniProtKB-UniRule"/>
</dbReference>
<dbReference type="FunFam" id="3.30.1310.10:FF:000001">
    <property type="entry name" value="Nucleoid-associated protein YbaB"/>
    <property type="match status" value="1"/>
</dbReference>
<dbReference type="Gene3D" id="3.30.1310.10">
    <property type="entry name" value="Nucleoid-associated protein YbaB-like domain"/>
    <property type="match status" value="1"/>
</dbReference>
<dbReference type="HAMAP" id="MF_00274">
    <property type="entry name" value="DNA_YbaB_EbfC"/>
    <property type="match status" value="1"/>
</dbReference>
<dbReference type="InterPro" id="IPR036894">
    <property type="entry name" value="YbaB-like_sf"/>
</dbReference>
<dbReference type="InterPro" id="IPR004401">
    <property type="entry name" value="YbaB/EbfC"/>
</dbReference>
<dbReference type="NCBIfam" id="TIGR00103">
    <property type="entry name" value="DNA_YbaB_EbfC"/>
    <property type="match status" value="1"/>
</dbReference>
<dbReference type="PANTHER" id="PTHR33449">
    <property type="entry name" value="NUCLEOID-ASSOCIATED PROTEIN YBAB"/>
    <property type="match status" value="1"/>
</dbReference>
<dbReference type="PANTHER" id="PTHR33449:SF1">
    <property type="entry name" value="NUCLEOID-ASSOCIATED PROTEIN YBAB"/>
    <property type="match status" value="1"/>
</dbReference>
<dbReference type="Pfam" id="PF02575">
    <property type="entry name" value="YbaB_DNA_bd"/>
    <property type="match status" value="1"/>
</dbReference>
<dbReference type="PIRSF" id="PIRSF004555">
    <property type="entry name" value="UCP004555"/>
    <property type="match status" value="1"/>
</dbReference>
<dbReference type="SUPFAM" id="SSF82607">
    <property type="entry name" value="YbaB-like"/>
    <property type="match status" value="1"/>
</dbReference>
<proteinExistence type="inferred from homology"/>
<reference key="1">
    <citation type="submission" date="2006-12" db="EMBL/GenBank/DDBJ databases">
        <title>Complete sequence of Shewanella amazonensis SB2B.</title>
        <authorList>
            <consortium name="US DOE Joint Genome Institute"/>
            <person name="Copeland A."/>
            <person name="Lucas S."/>
            <person name="Lapidus A."/>
            <person name="Barry K."/>
            <person name="Detter J.C."/>
            <person name="Glavina del Rio T."/>
            <person name="Hammon N."/>
            <person name="Israni S."/>
            <person name="Dalin E."/>
            <person name="Tice H."/>
            <person name="Pitluck S."/>
            <person name="Munk A.C."/>
            <person name="Brettin T."/>
            <person name="Bruce D."/>
            <person name="Han C."/>
            <person name="Tapia R."/>
            <person name="Gilna P."/>
            <person name="Schmutz J."/>
            <person name="Larimer F."/>
            <person name="Land M."/>
            <person name="Hauser L."/>
            <person name="Kyrpides N."/>
            <person name="Mikhailova N."/>
            <person name="Fredrickson J."/>
            <person name="Richardson P."/>
        </authorList>
    </citation>
    <scope>NUCLEOTIDE SEQUENCE [LARGE SCALE GENOMIC DNA]</scope>
    <source>
        <strain>ATCC BAA-1098 / SB2B</strain>
    </source>
</reference>
<gene>
    <name type="ordered locus">Sama_1311</name>
</gene>
<feature type="chain" id="PRO_1000003819" description="Nucleoid-associated protein Sama_1311">
    <location>
        <begin position="1"/>
        <end position="109"/>
    </location>
</feature>
<organism>
    <name type="scientific">Shewanella amazonensis (strain ATCC BAA-1098 / SB2B)</name>
    <dbReference type="NCBI Taxonomy" id="326297"/>
    <lineage>
        <taxon>Bacteria</taxon>
        <taxon>Pseudomonadati</taxon>
        <taxon>Pseudomonadota</taxon>
        <taxon>Gammaproteobacteria</taxon>
        <taxon>Alteromonadales</taxon>
        <taxon>Shewanellaceae</taxon>
        <taxon>Shewanella</taxon>
    </lineage>
</organism>
<name>Y1311_SHEAM</name>
<protein>
    <recommendedName>
        <fullName evidence="1">Nucleoid-associated protein Sama_1311</fullName>
    </recommendedName>
</protein>
<accession>A1S562</accession>